<gene>
    <name type="primary">fgf3</name>
</gene>
<dbReference type="EMBL" id="Z25539">
    <property type="protein sequence ID" value="CAA80987.1"/>
    <property type="molecule type" value="mRNA"/>
</dbReference>
<dbReference type="EMBL" id="X65237">
    <property type="protein sequence ID" value="CAA46341.1"/>
    <property type="molecule type" value="mRNA"/>
</dbReference>
<dbReference type="PIR" id="S39582">
    <property type="entry name" value="S39582"/>
</dbReference>
<dbReference type="RefSeq" id="NP_001079132.1">
    <property type="nucleotide sequence ID" value="NM_001085663.1"/>
</dbReference>
<dbReference type="SMR" id="P36386"/>
<dbReference type="BioGRID" id="96890">
    <property type="interactions" value="4"/>
</dbReference>
<dbReference type="GlyCosmos" id="P36386">
    <property type="glycosylation" value="1 site, No reported glycans"/>
</dbReference>
<dbReference type="GeneID" id="373669"/>
<dbReference type="KEGG" id="xla:373669"/>
<dbReference type="AGR" id="Xenbase:XB-GENE-17332732"/>
<dbReference type="CTD" id="373669"/>
<dbReference type="Xenbase" id="XB-GENE-17332732">
    <property type="gene designation" value="fgf3.L"/>
</dbReference>
<dbReference type="OrthoDB" id="6158176at2759"/>
<dbReference type="Proteomes" id="UP000186698">
    <property type="component" value="Chromosome 4L"/>
</dbReference>
<dbReference type="Bgee" id="373669">
    <property type="expression patterns" value="Expressed in internal ear and 4 other cell types or tissues"/>
</dbReference>
<dbReference type="GO" id="GO:0005737">
    <property type="term" value="C:cytoplasm"/>
    <property type="evidence" value="ECO:0000318"/>
    <property type="project" value="GO_Central"/>
</dbReference>
<dbReference type="GO" id="GO:0005615">
    <property type="term" value="C:extracellular space"/>
    <property type="evidence" value="ECO:0000318"/>
    <property type="project" value="GO_Central"/>
</dbReference>
<dbReference type="GO" id="GO:0005104">
    <property type="term" value="F:fibroblast growth factor receptor binding"/>
    <property type="evidence" value="ECO:0000318"/>
    <property type="project" value="GO_Central"/>
</dbReference>
<dbReference type="GO" id="GO:0008083">
    <property type="term" value="F:growth factor activity"/>
    <property type="evidence" value="ECO:0000318"/>
    <property type="project" value="GO_Central"/>
</dbReference>
<dbReference type="GO" id="GO:0008543">
    <property type="term" value="P:fibroblast growth factor receptor signaling pathway"/>
    <property type="evidence" value="ECO:0000318"/>
    <property type="project" value="GO_Central"/>
</dbReference>
<dbReference type="GO" id="GO:0022008">
    <property type="term" value="P:neurogenesis"/>
    <property type="evidence" value="ECO:0000318"/>
    <property type="project" value="GO_Central"/>
</dbReference>
<dbReference type="GO" id="GO:0051781">
    <property type="term" value="P:positive regulation of cell division"/>
    <property type="evidence" value="ECO:0007669"/>
    <property type="project" value="UniProtKB-KW"/>
</dbReference>
<dbReference type="GO" id="GO:0008284">
    <property type="term" value="P:positive regulation of cell population proliferation"/>
    <property type="evidence" value="ECO:0000318"/>
    <property type="project" value="GO_Central"/>
</dbReference>
<dbReference type="GO" id="GO:0043410">
    <property type="term" value="P:positive regulation of MAPK cascade"/>
    <property type="evidence" value="ECO:0000318"/>
    <property type="project" value="GO_Central"/>
</dbReference>
<dbReference type="GO" id="GO:0030334">
    <property type="term" value="P:regulation of cell migration"/>
    <property type="evidence" value="ECO:0000318"/>
    <property type="project" value="GO_Central"/>
</dbReference>
<dbReference type="CDD" id="cd23315">
    <property type="entry name" value="beta-trefoil_FGF3"/>
    <property type="match status" value="1"/>
</dbReference>
<dbReference type="FunFam" id="2.80.10.50:FF:000060">
    <property type="entry name" value="Fibroblast growth factor"/>
    <property type="match status" value="1"/>
</dbReference>
<dbReference type="Gene3D" id="2.80.10.50">
    <property type="match status" value="1"/>
</dbReference>
<dbReference type="InterPro" id="IPR002209">
    <property type="entry name" value="Fibroblast_GF_fam"/>
</dbReference>
<dbReference type="InterPro" id="IPR008996">
    <property type="entry name" value="IL1/FGF"/>
</dbReference>
<dbReference type="PANTHER" id="PTHR11486">
    <property type="entry name" value="FIBROBLAST GROWTH FACTOR"/>
    <property type="match status" value="1"/>
</dbReference>
<dbReference type="Pfam" id="PF00167">
    <property type="entry name" value="FGF"/>
    <property type="match status" value="1"/>
</dbReference>
<dbReference type="PRINTS" id="PR00263">
    <property type="entry name" value="HBGFFGF"/>
</dbReference>
<dbReference type="PRINTS" id="PR00262">
    <property type="entry name" value="IL1HBGF"/>
</dbReference>
<dbReference type="SMART" id="SM00442">
    <property type="entry name" value="FGF"/>
    <property type="match status" value="1"/>
</dbReference>
<dbReference type="SUPFAM" id="SSF50353">
    <property type="entry name" value="Cytokine"/>
    <property type="match status" value="1"/>
</dbReference>
<dbReference type="PROSITE" id="PS00247">
    <property type="entry name" value="HBGF_FGF"/>
    <property type="match status" value="1"/>
</dbReference>
<evidence type="ECO:0000250" key="1"/>
<evidence type="ECO:0000305" key="2"/>
<reference key="1">
    <citation type="journal article" date="1993" name="EMBO J.">
        <title>FGF3 from Xenopus laevis.</title>
        <authorList>
            <person name="Kiefer P."/>
            <person name="Mathieu M."/>
            <person name="Close J.M."/>
            <person name="Peters G."/>
            <person name="Dickson C."/>
        </authorList>
    </citation>
    <scope>NUCLEOTIDE SEQUENCE [MRNA]</scope>
    <scope>PARTIAL PROTEIN SEQUENCE</scope>
</reference>
<reference key="2">
    <citation type="journal article" date="1992" name="Development">
        <title>Developmental expression of the Xenopus int-2 (FGF-3) gene: activation by mesodermal and neural induction.</title>
        <authorList>
            <person name="Tannahill D."/>
            <person name="Isaacs H.V."/>
            <person name="Close M.J."/>
            <person name="Peters G."/>
            <person name="Slack J.M.W."/>
        </authorList>
    </citation>
    <scope>NUCLEOTIDE SEQUENCE [MRNA] OF 39-137</scope>
    <source>
        <tissue>Neurula</tissue>
    </source>
</reference>
<name>FGF3_XENLA</name>
<comment type="function">
    <text evidence="1">Plays an important role in the regulation of embryonic development, cell proliferation, and cell differentiation.</text>
</comment>
<comment type="similarity">
    <text evidence="2">Belongs to the heparin-binding growth factors family.</text>
</comment>
<keyword id="KW-0217">Developmental protein</keyword>
<keyword id="KW-0221">Differentiation</keyword>
<keyword id="KW-0903">Direct protein sequencing</keyword>
<keyword id="KW-0325">Glycoprotein</keyword>
<keyword id="KW-0339">Growth factor</keyword>
<keyword id="KW-0497">Mitogen</keyword>
<keyword id="KW-1185">Reference proteome</keyword>
<keyword id="KW-0732">Signal</keyword>
<proteinExistence type="evidence at protein level"/>
<sequence>MVIIWILLLSFISCGPQVSWAKRLEREPKYPCSRGGKLCDPRQRRDAGGRGGVYEHLGGAPRNRKLYCATKYHLQIHLNGKINGTLEKNSVFSILEITAVDVGIVAIKGLFSGRYLAMNQRGRLYASETYNPECEFVERIHELGYNTYASRLYRTVPSGAGTKRKASAERLWYVSINGKGRPRRGFKTRRTQKSSLFLPRVLDNKDHDAVRLFHTNAVYRESILKPSKPSGRQRRGQ</sequence>
<organism>
    <name type="scientific">Xenopus laevis</name>
    <name type="common">African clawed frog</name>
    <dbReference type="NCBI Taxonomy" id="8355"/>
    <lineage>
        <taxon>Eukaryota</taxon>
        <taxon>Metazoa</taxon>
        <taxon>Chordata</taxon>
        <taxon>Craniata</taxon>
        <taxon>Vertebrata</taxon>
        <taxon>Euteleostomi</taxon>
        <taxon>Amphibia</taxon>
        <taxon>Batrachia</taxon>
        <taxon>Anura</taxon>
        <taxon>Pipoidea</taxon>
        <taxon>Pipidae</taxon>
        <taxon>Xenopodinae</taxon>
        <taxon>Xenopus</taxon>
        <taxon>Xenopus</taxon>
    </lineage>
</organism>
<feature type="signal peptide">
    <location>
        <begin position="1"/>
        <end position="21"/>
    </location>
</feature>
<feature type="chain" id="PRO_0000008951" description="Fibroblast growth factor 3">
    <location>
        <begin position="22"/>
        <end position="237"/>
    </location>
</feature>
<feature type="glycosylation site" description="N-linked (GlcNAc...) asparagine">
    <location>
        <position position="83"/>
    </location>
</feature>
<accession>P36386</accession>
<protein>
    <recommendedName>
        <fullName>Fibroblast growth factor 3</fullName>
        <shortName>FGF-3</shortName>
    </recommendedName>
    <alternativeName>
        <fullName>Heparin-binding growth factor 3</fullName>
        <shortName>HBGF-3</shortName>
    </alternativeName>
    <alternativeName>
        <fullName>INT-2</fullName>
    </alternativeName>
</protein>